<feature type="chain" id="PRO_1000049528" description="Glycerol-3-phosphate dehydrogenase [NAD(P)+]">
    <location>
        <begin position="1"/>
        <end position="329"/>
    </location>
</feature>
<feature type="active site" description="Proton acceptor" evidence="1">
    <location>
        <position position="189"/>
    </location>
</feature>
<feature type="binding site" evidence="1">
    <location>
        <position position="10"/>
    </location>
    <ligand>
        <name>NADPH</name>
        <dbReference type="ChEBI" id="CHEBI:57783"/>
    </ligand>
</feature>
<feature type="binding site" evidence="1">
    <location>
        <position position="11"/>
    </location>
    <ligand>
        <name>NADPH</name>
        <dbReference type="ChEBI" id="CHEBI:57783"/>
    </ligand>
</feature>
<feature type="binding site" evidence="1">
    <location>
        <position position="31"/>
    </location>
    <ligand>
        <name>NADPH</name>
        <dbReference type="ChEBI" id="CHEBI:57783"/>
    </ligand>
</feature>
<feature type="binding site" evidence="1">
    <location>
        <position position="105"/>
    </location>
    <ligand>
        <name>NADPH</name>
        <dbReference type="ChEBI" id="CHEBI:57783"/>
    </ligand>
</feature>
<feature type="binding site" evidence="1">
    <location>
        <position position="105"/>
    </location>
    <ligand>
        <name>sn-glycerol 3-phosphate</name>
        <dbReference type="ChEBI" id="CHEBI:57597"/>
    </ligand>
</feature>
<feature type="binding site" evidence="1">
    <location>
        <position position="134"/>
    </location>
    <ligand>
        <name>sn-glycerol 3-phosphate</name>
        <dbReference type="ChEBI" id="CHEBI:57597"/>
    </ligand>
</feature>
<feature type="binding site" evidence="1">
    <location>
        <position position="136"/>
    </location>
    <ligand>
        <name>sn-glycerol 3-phosphate</name>
        <dbReference type="ChEBI" id="CHEBI:57597"/>
    </ligand>
</feature>
<feature type="binding site" evidence="1">
    <location>
        <position position="138"/>
    </location>
    <ligand>
        <name>NADPH</name>
        <dbReference type="ChEBI" id="CHEBI:57783"/>
    </ligand>
</feature>
<feature type="binding site" evidence="1">
    <location>
        <position position="189"/>
    </location>
    <ligand>
        <name>sn-glycerol 3-phosphate</name>
        <dbReference type="ChEBI" id="CHEBI:57597"/>
    </ligand>
</feature>
<feature type="binding site" evidence="1">
    <location>
        <position position="242"/>
    </location>
    <ligand>
        <name>sn-glycerol 3-phosphate</name>
        <dbReference type="ChEBI" id="CHEBI:57597"/>
    </ligand>
</feature>
<feature type="binding site" evidence="1">
    <location>
        <position position="252"/>
    </location>
    <ligand>
        <name>sn-glycerol 3-phosphate</name>
        <dbReference type="ChEBI" id="CHEBI:57597"/>
    </ligand>
</feature>
<feature type="binding site" evidence="1">
    <location>
        <position position="253"/>
    </location>
    <ligand>
        <name>NADPH</name>
        <dbReference type="ChEBI" id="CHEBI:57783"/>
    </ligand>
</feature>
<feature type="binding site" evidence="1">
    <location>
        <position position="253"/>
    </location>
    <ligand>
        <name>sn-glycerol 3-phosphate</name>
        <dbReference type="ChEBI" id="CHEBI:57597"/>
    </ligand>
</feature>
<feature type="binding site" evidence="1">
    <location>
        <position position="254"/>
    </location>
    <ligand>
        <name>sn-glycerol 3-phosphate</name>
        <dbReference type="ChEBI" id="CHEBI:57597"/>
    </ligand>
</feature>
<feature type="binding site" evidence="1">
    <location>
        <position position="277"/>
    </location>
    <ligand>
        <name>NADPH</name>
        <dbReference type="ChEBI" id="CHEBI:57783"/>
    </ligand>
</feature>
<feature type="binding site" evidence="1">
    <location>
        <position position="279"/>
    </location>
    <ligand>
        <name>NADPH</name>
        <dbReference type="ChEBI" id="CHEBI:57783"/>
    </ligand>
</feature>
<name>GPDA_NEIMF</name>
<evidence type="ECO:0000255" key="1">
    <source>
        <dbReference type="HAMAP-Rule" id="MF_00394"/>
    </source>
</evidence>
<accession>A1KWD9</accession>
<dbReference type="EC" id="1.1.1.94" evidence="1"/>
<dbReference type="EMBL" id="AM421808">
    <property type="protein sequence ID" value="CAM11196.1"/>
    <property type="molecule type" value="Genomic_DNA"/>
</dbReference>
<dbReference type="RefSeq" id="WP_002215013.1">
    <property type="nucleotide sequence ID" value="NC_008767.1"/>
</dbReference>
<dbReference type="SMR" id="A1KWD9"/>
<dbReference type="KEGG" id="nmc:NMC2041"/>
<dbReference type="HOGENOM" id="CLU_033449_0_2_4"/>
<dbReference type="UniPathway" id="UPA00940"/>
<dbReference type="Proteomes" id="UP000002286">
    <property type="component" value="Chromosome"/>
</dbReference>
<dbReference type="GO" id="GO:0005829">
    <property type="term" value="C:cytosol"/>
    <property type="evidence" value="ECO:0007669"/>
    <property type="project" value="TreeGrafter"/>
</dbReference>
<dbReference type="GO" id="GO:0047952">
    <property type="term" value="F:glycerol-3-phosphate dehydrogenase [NAD(P)+] activity"/>
    <property type="evidence" value="ECO:0007669"/>
    <property type="project" value="UniProtKB-UniRule"/>
</dbReference>
<dbReference type="GO" id="GO:0051287">
    <property type="term" value="F:NAD binding"/>
    <property type="evidence" value="ECO:0007669"/>
    <property type="project" value="InterPro"/>
</dbReference>
<dbReference type="GO" id="GO:0005975">
    <property type="term" value="P:carbohydrate metabolic process"/>
    <property type="evidence" value="ECO:0007669"/>
    <property type="project" value="InterPro"/>
</dbReference>
<dbReference type="GO" id="GO:0046167">
    <property type="term" value="P:glycerol-3-phosphate biosynthetic process"/>
    <property type="evidence" value="ECO:0007669"/>
    <property type="project" value="UniProtKB-UniRule"/>
</dbReference>
<dbReference type="GO" id="GO:0046168">
    <property type="term" value="P:glycerol-3-phosphate catabolic process"/>
    <property type="evidence" value="ECO:0007669"/>
    <property type="project" value="InterPro"/>
</dbReference>
<dbReference type="GO" id="GO:0006650">
    <property type="term" value="P:glycerophospholipid metabolic process"/>
    <property type="evidence" value="ECO:0007669"/>
    <property type="project" value="UniProtKB-UniRule"/>
</dbReference>
<dbReference type="GO" id="GO:0008654">
    <property type="term" value="P:phospholipid biosynthetic process"/>
    <property type="evidence" value="ECO:0007669"/>
    <property type="project" value="UniProtKB-KW"/>
</dbReference>
<dbReference type="FunFam" id="1.10.1040.10:FF:000001">
    <property type="entry name" value="Glycerol-3-phosphate dehydrogenase [NAD(P)+]"/>
    <property type="match status" value="1"/>
</dbReference>
<dbReference type="FunFam" id="3.40.50.720:FF:000019">
    <property type="entry name" value="Glycerol-3-phosphate dehydrogenase [NAD(P)+]"/>
    <property type="match status" value="1"/>
</dbReference>
<dbReference type="Gene3D" id="1.10.1040.10">
    <property type="entry name" value="N-(1-d-carboxylethyl)-l-norvaline Dehydrogenase, domain 2"/>
    <property type="match status" value="1"/>
</dbReference>
<dbReference type="Gene3D" id="3.40.50.720">
    <property type="entry name" value="NAD(P)-binding Rossmann-like Domain"/>
    <property type="match status" value="1"/>
</dbReference>
<dbReference type="HAMAP" id="MF_00394">
    <property type="entry name" value="NAD_Glyc3P_dehydrog"/>
    <property type="match status" value="1"/>
</dbReference>
<dbReference type="InterPro" id="IPR008927">
    <property type="entry name" value="6-PGluconate_DH-like_C_sf"/>
</dbReference>
<dbReference type="InterPro" id="IPR013328">
    <property type="entry name" value="6PGD_dom2"/>
</dbReference>
<dbReference type="InterPro" id="IPR006168">
    <property type="entry name" value="G3P_DH_NAD-dep"/>
</dbReference>
<dbReference type="InterPro" id="IPR006109">
    <property type="entry name" value="G3P_DH_NAD-dep_C"/>
</dbReference>
<dbReference type="InterPro" id="IPR011128">
    <property type="entry name" value="G3P_DH_NAD-dep_N"/>
</dbReference>
<dbReference type="InterPro" id="IPR036291">
    <property type="entry name" value="NAD(P)-bd_dom_sf"/>
</dbReference>
<dbReference type="NCBIfam" id="NF000940">
    <property type="entry name" value="PRK00094.1-2"/>
    <property type="match status" value="1"/>
</dbReference>
<dbReference type="NCBIfam" id="NF000942">
    <property type="entry name" value="PRK00094.1-4"/>
    <property type="match status" value="1"/>
</dbReference>
<dbReference type="PANTHER" id="PTHR11728">
    <property type="entry name" value="GLYCEROL-3-PHOSPHATE DEHYDROGENASE"/>
    <property type="match status" value="1"/>
</dbReference>
<dbReference type="PANTHER" id="PTHR11728:SF1">
    <property type="entry name" value="GLYCEROL-3-PHOSPHATE DEHYDROGENASE [NAD(+)] 2, CHLOROPLASTIC"/>
    <property type="match status" value="1"/>
</dbReference>
<dbReference type="Pfam" id="PF07479">
    <property type="entry name" value="NAD_Gly3P_dh_C"/>
    <property type="match status" value="1"/>
</dbReference>
<dbReference type="Pfam" id="PF01210">
    <property type="entry name" value="NAD_Gly3P_dh_N"/>
    <property type="match status" value="1"/>
</dbReference>
<dbReference type="PIRSF" id="PIRSF000114">
    <property type="entry name" value="Glycerol-3-P_dh"/>
    <property type="match status" value="1"/>
</dbReference>
<dbReference type="PRINTS" id="PR00077">
    <property type="entry name" value="GPDHDRGNASE"/>
</dbReference>
<dbReference type="SUPFAM" id="SSF48179">
    <property type="entry name" value="6-phosphogluconate dehydrogenase C-terminal domain-like"/>
    <property type="match status" value="1"/>
</dbReference>
<dbReference type="SUPFAM" id="SSF51735">
    <property type="entry name" value="NAD(P)-binding Rossmann-fold domains"/>
    <property type="match status" value="1"/>
</dbReference>
<dbReference type="PROSITE" id="PS00957">
    <property type="entry name" value="NAD_G3PDH"/>
    <property type="match status" value="1"/>
</dbReference>
<protein>
    <recommendedName>
        <fullName evidence="1">Glycerol-3-phosphate dehydrogenase [NAD(P)+]</fullName>
        <ecNumber evidence="1">1.1.1.94</ecNumber>
    </recommendedName>
    <alternativeName>
        <fullName evidence="1">NAD(P)(+)-dependent glycerol-3-phosphate dehydrogenase</fullName>
    </alternativeName>
    <alternativeName>
        <fullName evidence="1">NAD(P)H-dependent dihydroxyacetone-phosphate reductase</fullName>
    </alternativeName>
</protein>
<organism>
    <name type="scientific">Neisseria meningitidis serogroup C / serotype 2a (strain ATCC 700532 / DSM 15464 / FAM18)</name>
    <dbReference type="NCBI Taxonomy" id="272831"/>
    <lineage>
        <taxon>Bacteria</taxon>
        <taxon>Pseudomonadati</taxon>
        <taxon>Pseudomonadota</taxon>
        <taxon>Betaproteobacteria</taxon>
        <taxon>Neisseriales</taxon>
        <taxon>Neisseriaceae</taxon>
        <taxon>Neisseria</taxon>
    </lineage>
</organism>
<comment type="function">
    <text evidence="1">Catalyzes the reduction of the glycolytic intermediate dihydroxyacetone phosphate (DHAP) to sn-glycerol 3-phosphate (G3P), the key precursor for phospholipid synthesis.</text>
</comment>
<comment type="catalytic activity">
    <reaction evidence="1">
        <text>sn-glycerol 3-phosphate + NAD(+) = dihydroxyacetone phosphate + NADH + H(+)</text>
        <dbReference type="Rhea" id="RHEA:11092"/>
        <dbReference type="ChEBI" id="CHEBI:15378"/>
        <dbReference type="ChEBI" id="CHEBI:57540"/>
        <dbReference type="ChEBI" id="CHEBI:57597"/>
        <dbReference type="ChEBI" id="CHEBI:57642"/>
        <dbReference type="ChEBI" id="CHEBI:57945"/>
        <dbReference type="EC" id="1.1.1.94"/>
    </reaction>
    <physiologicalReaction direction="right-to-left" evidence="1">
        <dbReference type="Rhea" id="RHEA:11094"/>
    </physiologicalReaction>
</comment>
<comment type="catalytic activity">
    <reaction evidence="1">
        <text>sn-glycerol 3-phosphate + NADP(+) = dihydroxyacetone phosphate + NADPH + H(+)</text>
        <dbReference type="Rhea" id="RHEA:11096"/>
        <dbReference type="ChEBI" id="CHEBI:15378"/>
        <dbReference type="ChEBI" id="CHEBI:57597"/>
        <dbReference type="ChEBI" id="CHEBI:57642"/>
        <dbReference type="ChEBI" id="CHEBI:57783"/>
        <dbReference type="ChEBI" id="CHEBI:58349"/>
        <dbReference type="EC" id="1.1.1.94"/>
    </reaction>
    <physiologicalReaction direction="right-to-left" evidence="1">
        <dbReference type="Rhea" id="RHEA:11098"/>
    </physiologicalReaction>
</comment>
<comment type="pathway">
    <text evidence="1">Membrane lipid metabolism; glycerophospholipid metabolism.</text>
</comment>
<comment type="subcellular location">
    <subcellularLocation>
        <location evidence="1">Cytoplasm</location>
    </subcellularLocation>
</comment>
<comment type="similarity">
    <text evidence="1">Belongs to the NAD-dependent glycerol-3-phosphate dehydrogenase family.</text>
</comment>
<reference key="1">
    <citation type="journal article" date="2007" name="PLoS Genet.">
        <title>Meningococcal genetic variation mechanisms viewed through comparative analysis of serogroup C strain FAM18.</title>
        <authorList>
            <person name="Bentley S.D."/>
            <person name="Vernikos G.S."/>
            <person name="Snyder L.A.S."/>
            <person name="Churcher C."/>
            <person name="Arrowsmith C."/>
            <person name="Chillingworth T."/>
            <person name="Cronin A."/>
            <person name="Davis P.H."/>
            <person name="Holroyd N.E."/>
            <person name="Jagels K."/>
            <person name="Maddison M."/>
            <person name="Moule S."/>
            <person name="Rabbinowitsch E."/>
            <person name="Sharp S."/>
            <person name="Unwin L."/>
            <person name="Whitehead S."/>
            <person name="Quail M.A."/>
            <person name="Achtman M."/>
            <person name="Barrell B.G."/>
            <person name="Saunders N.J."/>
            <person name="Parkhill J."/>
        </authorList>
    </citation>
    <scope>NUCLEOTIDE SEQUENCE [LARGE SCALE GENOMIC DNA]</scope>
    <source>
        <strain>ATCC 700532 / DSM 15464 / FAM18</strain>
    </source>
</reference>
<gene>
    <name evidence="1" type="primary">gpsA</name>
    <name type="ordered locus">NMC2041</name>
</gene>
<proteinExistence type="inferred from homology"/>
<keyword id="KW-0963">Cytoplasm</keyword>
<keyword id="KW-0444">Lipid biosynthesis</keyword>
<keyword id="KW-0443">Lipid metabolism</keyword>
<keyword id="KW-0520">NAD</keyword>
<keyword id="KW-0521">NADP</keyword>
<keyword id="KW-0547">Nucleotide-binding</keyword>
<keyword id="KW-0560">Oxidoreductase</keyword>
<keyword id="KW-0594">Phospholipid biosynthesis</keyword>
<keyword id="KW-1208">Phospholipid metabolism</keyword>
<sequence length="329" mass="35338">MKITVIGAGSWGTALALHFSQHGNRVSLWTRNADQVRQMQEARENKRGLPGFSFPETLEVCADLADALKDSGLVLIVTSVAGLRSSAELLKQYGAGHLPVLAACKGFEQDTGLLTFQVLKEVLPDNKKIGVLSGPSFAQELAKQLPCAVVLASENQEWIEELVPQLNTTVMRLYGSTDVIGVAVGGAVKNVMAIATGLSDGLEYGLNARAALVTRGLAEITRLASAMGAQPKTMMGLAGIGDLILTCTGALSRNRRVGLGLAEGKELHQVLVEIGHVSEGVSTIEEVFNTACKYQIDMPITQTLLQLIRKEMTPQQVVERLMERSARFE</sequence>